<evidence type="ECO:0000255" key="1">
    <source>
        <dbReference type="HAMAP-Rule" id="MF_01812"/>
    </source>
</evidence>
<evidence type="ECO:0000305" key="2"/>
<accession>A1KLA8</accession>
<comment type="function">
    <text evidence="1">Effector that is released into the host cell and affects host immune responses. Acts as an acetyltransferase that acetylates lysine residues of host proteins.</text>
</comment>
<comment type="catalytic activity">
    <reaction evidence="1">
        <text>L-lysyl-[protein] + acetyl-CoA = N(6)-acetyl-L-lysyl-[protein] + CoA + H(+)</text>
        <dbReference type="Rhea" id="RHEA:45948"/>
        <dbReference type="Rhea" id="RHEA-COMP:9752"/>
        <dbReference type="Rhea" id="RHEA-COMP:10731"/>
        <dbReference type="ChEBI" id="CHEBI:15378"/>
        <dbReference type="ChEBI" id="CHEBI:29969"/>
        <dbReference type="ChEBI" id="CHEBI:57287"/>
        <dbReference type="ChEBI" id="CHEBI:57288"/>
        <dbReference type="ChEBI" id="CHEBI:61930"/>
    </reaction>
</comment>
<comment type="subunit">
    <text evidence="1">Homohexamer; trimer of dimers.</text>
</comment>
<comment type="subcellular location">
    <subcellularLocation>
        <location evidence="1">Secreted</location>
    </subcellularLocation>
    <subcellularLocation>
        <location evidence="1">Host cytoplasmic vesicle</location>
        <location evidence="1">Host phagosome</location>
    </subcellularLocation>
    <subcellularLocation>
        <location evidence="1">Extracellular vesicle</location>
        <location evidence="1">Bacterial extracellular vesicle</location>
    </subcellularLocation>
    <subcellularLocation>
        <location evidence="1">Host extracellular space</location>
    </subcellularLocation>
</comment>
<comment type="similarity">
    <text evidence="1">Belongs to the acetyltransferase Eis family.</text>
</comment>
<comment type="sequence caution" evidence="2">
    <conflict type="erroneous initiation">
        <sequence resource="EMBL-CDS" id="CAL72420"/>
    </conflict>
    <text>Extended N-terminus.</text>
</comment>
<keyword id="KW-0012">Acyltransferase</keyword>
<keyword id="KW-1036">Host cytoplasmic vesicle</keyword>
<keyword id="KW-0964">Secreted</keyword>
<keyword id="KW-0808">Transferase</keyword>
<dbReference type="EC" id="2.3.1.-" evidence="1"/>
<dbReference type="EMBL" id="AM408590">
    <property type="protein sequence ID" value="CAL72420.1"/>
    <property type="status" value="ALT_INIT"/>
    <property type="molecule type" value="Genomic_DNA"/>
</dbReference>
<dbReference type="SMR" id="A1KLA8"/>
<dbReference type="KEGG" id="mbb:BCG_2432c"/>
<dbReference type="HOGENOM" id="CLU_050659_0_0_11"/>
<dbReference type="Proteomes" id="UP000001472">
    <property type="component" value="Chromosome"/>
</dbReference>
<dbReference type="GO" id="GO:0097691">
    <property type="term" value="C:bacterial extracellular vesicle"/>
    <property type="evidence" value="ECO:0007669"/>
    <property type="project" value="UniProtKB-SubCell"/>
</dbReference>
<dbReference type="GO" id="GO:0044161">
    <property type="term" value="C:host cell cytoplasmic vesicle"/>
    <property type="evidence" value="ECO:0007669"/>
    <property type="project" value="UniProtKB-SubCell"/>
</dbReference>
<dbReference type="GO" id="GO:0043655">
    <property type="term" value="C:host extracellular space"/>
    <property type="evidence" value="ECO:0007669"/>
    <property type="project" value="UniProtKB-SubCell"/>
</dbReference>
<dbReference type="GO" id="GO:0034069">
    <property type="term" value="F:aminoglycoside N-acetyltransferase activity"/>
    <property type="evidence" value="ECO:0007669"/>
    <property type="project" value="TreeGrafter"/>
</dbReference>
<dbReference type="GO" id="GO:0061733">
    <property type="term" value="F:protein-lysine-acetyltransferase activity"/>
    <property type="evidence" value="ECO:0007669"/>
    <property type="project" value="RHEA"/>
</dbReference>
<dbReference type="GO" id="GO:0030649">
    <property type="term" value="P:aminoglycoside antibiotic catabolic process"/>
    <property type="evidence" value="ECO:0007669"/>
    <property type="project" value="TreeGrafter"/>
</dbReference>
<dbReference type="CDD" id="cd04301">
    <property type="entry name" value="NAT_SF"/>
    <property type="match status" value="1"/>
</dbReference>
<dbReference type="FunFam" id="3.30.1050.10:FF:000008">
    <property type="entry name" value="N-acetyltransferase Eis"/>
    <property type="match status" value="1"/>
</dbReference>
<dbReference type="FunFam" id="3.40.630.30:FF:000112">
    <property type="entry name" value="N-acetyltransferase Eis"/>
    <property type="match status" value="1"/>
</dbReference>
<dbReference type="Gene3D" id="3.40.630.30">
    <property type="match status" value="2"/>
</dbReference>
<dbReference type="Gene3D" id="3.30.1050.10">
    <property type="entry name" value="SCP2 sterol-binding domain"/>
    <property type="match status" value="1"/>
</dbReference>
<dbReference type="HAMAP" id="MF_01812">
    <property type="entry name" value="Eis"/>
    <property type="match status" value="1"/>
</dbReference>
<dbReference type="InterPro" id="IPR041380">
    <property type="entry name" value="Acetyltransf_17"/>
</dbReference>
<dbReference type="InterPro" id="IPR051554">
    <property type="entry name" value="Acetyltransferase_Eis"/>
</dbReference>
<dbReference type="InterPro" id="IPR016181">
    <property type="entry name" value="Acyl_CoA_acyltransferase"/>
</dbReference>
<dbReference type="InterPro" id="IPR025559">
    <property type="entry name" value="Eis_dom"/>
</dbReference>
<dbReference type="InterPro" id="IPR000182">
    <property type="entry name" value="GNAT_dom"/>
</dbReference>
<dbReference type="InterPro" id="IPR022902">
    <property type="entry name" value="NAcTrfase_Eis"/>
</dbReference>
<dbReference type="InterPro" id="IPR036527">
    <property type="entry name" value="SCP2_sterol-bd_dom_sf"/>
</dbReference>
<dbReference type="NCBIfam" id="NF002364">
    <property type="entry name" value="PRK01346.1-1"/>
    <property type="match status" value="1"/>
</dbReference>
<dbReference type="NCBIfam" id="NF002367">
    <property type="entry name" value="PRK01346.1-4"/>
    <property type="match status" value="1"/>
</dbReference>
<dbReference type="PANTHER" id="PTHR37817">
    <property type="entry name" value="N-ACETYLTRANSFERASE EIS"/>
    <property type="match status" value="1"/>
</dbReference>
<dbReference type="PANTHER" id="PTHR37817:SF1">
    <property type="entry name" value="N-ACETYLTRANSFERASE EIS"/>
    <property type="match status" value="1"/>
</dbReference>
<dbReference type="Pfam" id="PF17668">
    <property type="entry name" value="Acetyltransf_17"/>
    <property type="match status" value="1"/>
</dbReference>
<dbReference type="Pfam" id="PF13527">
    <property type="entry name" value="Acetyltransf_9"/>
    <property type="match status" value="1"/>
</dbReference>
<dbReference type="Pfam" id="PF13530">
    <property type="entry name" value="SCP2_2"/>
    <property type="match status" value="1"/>
</dbReference>
<dbReference type="SUPFAM" id="SSF55729">
    <property type="entry name" value="Acyl-CoA N-acyltransferases (Nat)"/>
    <property type="match status" value="1"/>
</dbReference>
<dbReference type="SUPFAM" id="SSF55718">
    <property type="entry name" value="SCP-like"/>
    <property type="match status" value="1"/>
</dbReference>
<dbReference type="PROSITE" id="PS51186">
    <property type="entry name" value="GNAT"/>
    <property type="match status" value="1"/>
</dbReference>
<protein>
    <recommendedName>
        <fullName evidence="1">N-acetyltransferase Eis</fullName>
        <ecNumber evidence="1">2.3.1.-</ecNumber>
    </recommendedName>
    <alternativeName>
        <fullName evidence="1">Enhanced intracellular survival protein</fullName>
    </alternativeName>
    <alternativeName>
        <fullName evidence="1">Protein-lysine N-acetyltransferase</fullName>
    </alternativeName>
</protein>
<organism>
    <name type="scientific">Mycobacterium bovis (strain BCG / Pasteur 1173P2)</name>
    <dbReference type="NCBI Taxonomy" id="410289"/>
    <lineage>
        <taxon>Bacteria</taxon>
        <taxon>Bacillati</taxon>
        <taxon>Actinomycetota</taxon>
        <taxon>Actinomycetes</taxon>
        <taxon>Mycobacteriales</taxon>
        <taxon>Mycobacteriaceae</taxon>
        <taxon>Mycobacterium</taxon>
        <taxon>Mycobacterium tuberculosis complex</taxon>
    </lineage>
</organism>
<gene>
    <name evidence="1" type="primary">eis</name>
    <name type="ordered locus">BCG_2432c</name>
</gene>
<proteinExistence type="inferred from homology"/>
<feature type="chain" id="PRO_1000070194" description="N-acetyltransferase Eis">
    <location>
        <begin position="1"/>
        <end position="402"/>
    </location>
</feature>
<feature type="domain" description="N-acetyltransferase" evidence="1">
    <location>
        <begin position="3"/>
        <end position="154"/>
    </location>
</feature>
<feature type="active site" description="Proton donor" evidence="1">
    <location>
        <position position="126"/>
    </location>
</feature>
<feature type="active site" description="Proton acceptor; via carboxylate" evidence="1">
    <location>
        <position position="402"/>
    </location>
</feature>
<feature type="binding site" evidence="1">
    <location>
        <begin position="85"/>
        <end position="87"/>
    </location>
    <ligand>
        <name>acetyl-CoA</name>
        <dbReference type="ChEBI" id="CHEBI:57288"/>
    </ligand>
</feature>
<feature type="binding site" evidence="1">
    <location>
        <begin position="93"/>
        <end position="98"/>
    </location>
    <ligand>
        <name>acetyl-CoA</name>
        <dbReference type="ChEBI" id="CHEBI:57288"/>
    </ligand>
</feature>
<feature type="binding site" evidence="1">
    <location>
        <begin position="121"/>
        <end position="122"/>
    </location>
    <ligand>
        <name>acetyl-CoA</name>
        <dbReference type="ChEBI" id="CHEBI:57288"/>
    </ligand>
</feature>
<sequence>MTVTLCSPTEDDWPGMFLLAAASFTDFIGPESATAWRTLVPTDGAVVVRDGAGPGSEVVGMALYMDLRLTVPGEVVLPTAGLSFVAVAPTHRRRGLLRAMCAELHRRIADSGYPVAALHASEGGIYGRFGYGPATTLHELTVDRRFARFHADAPGGGLGGSSVRLVRPTEHRGEFEAIYERWRQQVPGGLLRPQVLWDELLAECKAAPGGDRESFALLHPDGYALYRVDRTDLKLARVSELRAVTADAHCALWRALIGLDSMERISIITHPQDPLPHLLTDTRLARTTWRQDGLWLRIMNVPAALEARGYAHEVGEFSTVLEVSDGGRFALKIGDGRARCTPTDAAAEIEMDRDVLGSLYLGAHRASTLAAANRLRTKDSQLLRRLDAAFASDVPVQTAFEF</sequence>
<name>EIS_MYCBP</name>
<reference key="1">
    <citation type="journal article" date="2007" name="Proc. Natl. Acad. Sci. U.S.A.">
        <title>Genome plasticity of BCG and impact on vaccine efficacy.</title>
        <authorList>
            <person name="Brosch R."/>
            <person name="Gordon S.V."/>
            <person name="Garnier T."/>
            <person name="Eiglmeier K."/>
            <person name="Frigui W."/>
            <person name="Valenti P."/>
            <person name="Dos Santos S."/>
            <person name="Duthoy S."/>
            <person name="Lacroix C."/>
            <person name="Garcia-Pelayo C."/>
            <person name="Inwald J.K."/>
            <person name="Golby P."/>
            <person name="Garcia J.N."/>
            <person name="Hewinson R.G."/>
            <person name="Behr M.A."/>
            <person name="Quail M.A."/>
            <person name="Churcher C."/>
            <person name="Barrell B.G."/>
            <person name="Parkhill J."/>
            <person name="Cole S.T."/>
        </authorList>
    </citation>
    <scope>NUCLEOTIDE SEQUENCE [LARGE SCALE GENOMIC DNA]</scope>
    <source>
        <strain>BCG / Pasteur 1173P2</strain>
    </source>
</reference>